<gene>
    <name type="primary">PLOD3</name>
</gene>
<protein>
    <recommendedName>
        <fullName>Multifunctional procollagen lysine hydroxylase and glycosyltransferase LH3</fullName>
    </recommendedName>
    <domain>
        <recommendedName>
            <fullName>Procollagen-lysine,2-oxoglutarate 5-dioxygenase 3</fullName>
            <ecNumber evidence="7 8 9 13 15 16">1.14.11.4</ecNumber>
        </recommendedName>
        <alternativeName>
            <fullName evidence="18 19">Lysyl hydroxylase 3</fullName>
            <shortName evidence="17">LH3</shortName>
        </alternativeName>
    </domain>
    <domain>
        <recommendedName>
            <fullName>Procollagen glycosyltransferase</fullName>
            <ecNumber evidence="7 8 9 13">2.4.1.50</ecNumber>
            <ecNumber evidence="4 5 6 7 8 9 13">2.4.1.66</ecNumber>
        </recommendedName>
        <alternativeName>
            <fullName>Galactosylhydroxylysine-glucosyltransferase</fullName>
        </alternativeName>
        <alternativeName>
            <fullName>Procollagen galactosyltransferase</fullName>
        </alternativeName>
        <alternativeName>
            <fullName>Procollagen glucosyltransferase</fullName>
        </alternativeName>
    </domain>
</protein>
<dbReference type="EC" id="1.14.11.4" evidence="7 8 9 13 15 16"/>
<dbReference type="EC" id="2.4.1.50" evidence="7 8 9 13"/>
<dbReference type="EC" id="2.4.1.66" evidence="4 5 6 7 8 9 13"/>
<dbReference type="EMBL" id="AF046889">
    <property type="protein sequence ID" value="AAC39753.1"/>
    <property type="molecule type" value="mRNA"/>
</dbReference>
<dbReference type="EMBL" id="AF068229">
    <property type="protein sequence ID" value="AAC34808.1"/>
    <property type="molecule type" value="mRNA"/>
</dbReference>
<dbReference type="EMBL" id="AF207069">
    <property type="protein sequence ID" value="AAF63701.1"/>
    <property type="molecule type" value="Genomic_DNA"/>
</dbReference>
<dbReference type="EMBL" id="AY220458">
    <property type="protein sequence ID" value="AAO61775.1"/>
    <property type="molecule type" value="mRNA"/>
</dbReference>
<dbReference type="EMBL" id="AK312743">
    <property type="protein sequence ID" value="BAG35613.1"/>
    <property type="molecule type" value="mRNA"/>
</dbReference>
<dbReference type="EMBL" id="AC004876">
    <property type="protein sequence ID" value="AAD45831.1"/>
    <property type="molecule type" value="Genomic_DNA"/>
</dbReference>
<dbReference type="EMBL" id="CH471197">
    <property type="protein sequence ID" value="EAW50205.1"/>
    <property type="molecule type" value="Genomic_DNA"/>
</dbReference>
<dbReference type="EMBL" id="BC011674">
    <property type="protein sequence ID" value="AAH11674.1"/>
    <property type="molecule type" value="mRNA"/>
</dbReference>
<dbReference type="CCDS" id="CCDS5715.1"/>
<dbReference type="RefSeq" id="NP_001075.1">
    <property type="nucleotide sequence ID" value="NM_001084.5"/>
</dbReference>
<dbReference type="RefSeq" id="XP_054215277.1">
    <property type="nucleotide sequence ID" value="XM_054359302.1"/>
</dbReference>
<dbReference type="PDB" id="6FXK">
    <property type="method" value="X-ray"/>
    <property type="resolution" value="2.70 A"/>
    <property type="chains" value="A=25-738"/>
</dbReference>
<dbReference type="PDB" id="6FXM">
    <property type="method" value="X-ray"/>
    <property type="resolution" value="2.10 A"/>
    <property type="chains" value="A=25-738"/>
</dbReference>
<dbReference type="PDB" id="6FXR">
    <property type="method" value="X-ray"/>
    <property type="resolution" value="2.10 A"/>
    <property type="chains" value="A=25-738"/>
</dbReference>
<dbReference type="PDB" id="6FXT">
    <property type="method" value="X-ray"/>
    <property type="resolution" value="2.50 A"/>
    <property type="chains" value="A=25-738"/>
</dbReference>
<dbReference type="PDB" id="6FXX">
    <property type="method" value="X-ray"/>
    <property type="resolution" value="3.00 A"/>
    <property type="chains" value="A=25-738"/>
</dbReference>
<dbReference type="PDB" id="6FXY">
    <property type="method" value="X-ray"/>
    <property type="resolution" value="2.14 A"/>
    <property type="chains" value="A=25-738"/>
</dbReference>
<dbReference type="PDB" id="6TE3">
    <property type="method" value="X-ray"/>
    <property type="resolution" value="2.30 A"/>
    <property type="chains" value="A=25-738"/>
</dbReference>
<dbReference type="PDB" id="6TEC">
    <property type="method" value="X-ray"/>
    <property type="resolution" value="2.40 A"/>
    <property type="chains" value="A=25-738"/>
</dbReference>
<dbReference type="PDB" id="6TES">
    <property type="method" value="X-ray"/>
    <property type="resolution" value="2.20 A"/>
    <property type="chains" value="A=25-738"/>
</dbReference>
<dbReference type="PDB" id="6TEU">
    <property type="method" value="X-ray"/>
    <property type="resolution" value="3.00 A"/>
    <property type="chains" value="A=25-738"/>
</dbReference>
<dbReference type="PDB" id="6TEX">
    <property type="method" value="X-ray"/>
    <property type="resolution" value="2.30 A"/>
    <property type="chains" value="A=25-738"/>
</dbReference>
<dbReference type="PDB" id="6TEZ">
    <property type="method" value="X-ray"/>
    <property type="resolution" value="2.70 A"/>
    <property type="chains" value="A=25-738"/>
</dbReference>
<dbReference type="PDB" id="6WFV">
    <property type="method" value="X-ray"/>
    <property type="resolution" value="1.70 A"/>
    <property type="chains" value="A=32-266"/>
</dbReference>
<dbReference type="PDB" id="8ONE">
    <property type="method" value="X-ray"/>
    <property type="resolution" value="2.30 A"/>
    <property type="chains" value="A=25-738"/>
</dbReference>
<dbReference type="PDBsum" id="6FXK"/>
<dbReference type="PDBsum" id="6FXM"/>
<dbReference type="PDBsum" id="6FXR"/>
<dbReference type="PDBsum" id="6FXT"/>
<dbReference type="PDBsum" id="6FXX"/>
<dbReference type="PDBsum" id="6FXY"/>
<dbReference type="PDBsum" id="6TE3"/>
<dbReference type="PDBsum" id="6TEC"/>
<dbReference type="PDBsum" id="6TES"/>
<dbReference type="PDBsum" id="6TEU"/>
<dbReference type="PDBsum" id="6TEX"/>
<dbReference type="PDBsum" id="6TEZ"/>
<dbReference type="PDBsum" id="6WFV"/>
<dbReference type="PDBsum" id="8ONE"/>
<dbReference type="SASBDB" id="O60568"/>
<dbReference type="SMR" id="O60568"/>
<dbReference type="BioGRID" id="114467">
    <property type="interactions" value="171"/>
</dbReference>
<dbReference type="CORUM" id="O60568"/>
<dbReference type="FunCoup" id="O60568">
    <property type="interactions" value="1001"/>
</dbReference>
<dbReference type="IntAct" id="O60568">
    <property type="interactions" value="97"/>
</dbReference>
<dbReference type="MINT" id="O60568"/>
<dbReference type="STRING" id="9606.ENSP00000223127"/>
<dbReference type="BindingDB" id="O60568"/>
<dbReference type="ChEMBL" id="CHEMBL5465277"/>
<dbReference type="DrugBank" id="DB00126">
    <property type="generic name" value="Ascorbic acid"/>
</dbReference>
<dbReference type="DrugBank" id="DB00139">
    <property type="generic name" value="Succinic acid"/>
</dbReference>
<dbReference type="MoonDB" id="O60568">
    <property type="type" value="Curated"/>
</dbReference>
<dbReference type="MoonProt" id="O60568"/>
<dbReference type="GlyConnect" id="1635">
    <property type="glycosylation" value="9 N-Linked glycans (2 sites)"/>
</dbReference>
<dbReference type="GlyCosmos" id="O60568">
    <property type="glycosylation" value="2 sites, 10 glycans"/>
</dbReference>
<dbReference type="GlyGen" id="O60568">
    <property type="glycosylation" value="7 sites, 45 N-linked glycans (2 sites), 2 O-linked glycans (3 sites)"/>
</dbReference>
<dbReference type="iPTMnet" id="O60568"/>
<dbReference type="PhosphoSitePlus" id="O60568"/>
<dbReference type="BioMuta" id="PLOD3"/>
<dbReference type="CPTAC" id="CPTAC-113"/>
<dbReference type="CPTAC" id="CPTAC-114"/>
<dbReference type="CPTAC" id="CPTAC-1501"/>
<dbReference type="jPOST" id="O60568"/>
<dbReference type="MassIVE" id="O60568"/>
<dbReference type="PaxDb" id="9606-ENSP00000223127"/>
<dbReference type="PeptideAtlas" id="O60568"/>
<dbReference type="ProteomicsDB" id="49474"/>
<dbReference type="Pumba" id="O60568"/>
<dbReference type="Antibodypedia" id="16729">
    <property type="antibodies" value="187 antibodies from 26 providers"/>
</dbReference>
<dbReference type="DNASU" id="8985"/>
<dbReference type="Ensembl" id="ENST00000223127.8">
    <property type="protein sequence ID" value="ENSP00000223127.3"/>
    <property type="gene ID" value="ENSG00000106397.12"/>
</dbReference>
<dbReference type="GeneID" id="8985"/>
<dbReference type="KEGG" id="hsa:8985"/>
<dbReference type="MANE-Select" id="ENST00000223127.8">
    <property type="protein sequence ID" value="ENSP00000223127.3"/>
    <property type="RefSeq nucleotide sequence ID" value="NM_001084.5"/>
    <property type="RefSeq protein sequence ID" value="NP_001075.1"/>
</dbReference>
<dbReference type="UCSC" id="uc003uyd.4">
    <property type="organism name" value="human"/>
</dbReference>
<dbReference type="AGR" id="HGNC:9083"/>
<dbReference type="CTD" id="8985"/>
<dbReference type="DisGeNET" id="8985"/>
<dbReference type="GeneCards" id="PLOD3"/>
<dbReference type="HGNC" id="HGNC:9083">
    <property type="gene designation" value="PLOD3"/>
</dbReference>
<dbReference type="HPA" id="ENSG00000106397">
    <property type="expression patterns" value="Low tissue specificity"/>
</dbReference>
<dbReference type="MalaCards" id="PLOD3"/>
<dbReference type="MIM" id="603066">
    <property type="type" value="gene"/>
</dbReference>
<dbReference type="MIM" id="612394">
    <property type="type" value="phenotype"/>
</dbReference>
<dbReference type="neXtProt" id="NX_O60568"/>
<dbReference type="OpenTargets" id="ENSG00000106397"/>
<dbReference type="Orphanet" id="300284">
    <property type="disease" value="Connective tissue disorder due to lysyl hydroxylase-3 deficiency"/>
</dbReference>
<dbReference type="PharmGKB" id="PA33413"/>
<dbReference type="VEuPathDB" id="HostDB:ENSG00000106397"/>
<dbReference type="eggNOG" id="KOG1971">
    <property type="taxonomic scope" value="Eukaryota"/>
</dbReference>
<dbReference type="GeneTree" id="ENSGT01030000234558"/>
<dbReference type="HOGENOM" id="CLU_022320_1_0_1"/>
<dbReference type="InParanoid" id="O60568"/>
<dbReference type="OMA" id="ETMEDCG"/>
<dbReference type="OrthoDB" id="69177at2759"/>
<dbReference type="PAN-GO" id="O60568">
    <property type="GO annotations" value="4 GO annotations based on evolutionary models"/>
</dbReference>
<dbReference type="PhylomeDB" id="O60568"/>
<dbReference type="TreeFam" id="TF313826"/>
<dbReference type="BRENDA" id="1.14.11.4">
    <property type="organism ID" value="2681"/>
</dbReference>
<dbReference type="BRENDA" id="2.4.1.50">
    <property type="organism ID" value="2681"/>
</dbReference>
<dbReference type="BRENDA" id="2.4.1.66">
    <property type="organism ID" value="2681"/>
</dbReference>
<dbReference type="PathwayCommons" id="O60568"/>
<dbReference type="Reactome" id="R-HSA-1650814">
    <property type="pathway name" value="Collagen biosynthesis and modifying enzymes"/>
</dbReference>
<dbReference type="SignaLink" id="O60568"/>
<dbReference type="BioGRID-ORCS" id="8985">
    <property type="hits" value="15 hits in 1163 CRISPR screens"/>
</dbReference>
<dbReference type="ChiTaRS" id="PLOD3">
    <property type="organism name" value="human"/>
</dbReference>
<dbReference type="GeneWiki" id="PLOD3"/>
<dbReference type="GenomeRNAi" id="8985"/>
<dbReference type="Pharos" id="O60568">
    <property type="development level" value="Tbio"/>
</dbReference>
<dbReference type="PRO" id="PR:O60568"/>
<dbReference type="Proteomes" id="UP000005640">
    <property type="component" value="Chromosome 7"/>
</dbReference>
<dbReference type="RNAct" id="O60568">
    <property type="molecule type" value="protein"/>
</dbReference>
<dbReference type="Bgee" id="ENSG00000106397">
    <property type="expression patterns" value="Expressed in stromal cell of endometrium and 191 other cell types or tissues"/>
</dbReference>
<dbReference type="ExpressionAtlas" id="O60568">
    <property type="expression patterns" value="baseline and differential"/>
</dbReference>
<dbReference type="GO" id="GO:0062023">
    <property type="term" value="C:collagen-containing extracellular matrix"/>
    <property type="evidence" value="ECO:0000318"/>
    <property type="project" value="GO_Central"/>
</dbReference>
<dbReference type="GO" id="GO:0005783">
    <property type="term" value="C:endoplasmic reticulum"/>
    <property type="evidence" value="ECO:0000314"/>
    <property type="project" value="CAFA"/>
</dbReference>
<dbReference type="GO" id="GO:0005788">
    <property type="term" value="C:endoplasmic reticulum lumen"/>
    <property type="evidence" value="ECO:0007669"/>
    <property type="project" value="UniProtKB-SubCell"/>
</dbReference>
<dbReference type="GO" id="GO:0005789">
    <property type="term" value="C:endoplasmic reticulum membrane"/>
    <property type="evidence" value="ECO:0000304"/>
    <property type="project" value="Reactome"/>
</dbReference>
<dbReference type="GO" id="GO:0070062">
    <property type="term" value="C:extracellular exosome"/>
    <property type="evidence" value="ECO:0007005"/>
    <property type="project" value="UniProtKB"/>
</dbReference>
<dbReference type="GO" id="GO:0005615">
    <property type="term" value="C:extracellular space"/>
    <property type="evidence" value="ECO:0000250"/>
    <property type="project" value="UniProtKB"/>
</dbReference>
<dbReference type="GO" id="GO:0005794">
    <property type="term" value="C:Golgi apparatus"/>
    <property type="evidence" value="ECO:0000314"/>
    <property type="project" value="CAFA"/>
</dbReference>
<dbReference type="GO" id="GO:0005791">
    <property type="term" value="C:rough endoplasmic reticulum"/>
    <property type="evidence" value="ECO:0007669"/>
    <property type="project" value="UniProtKB-SubCell"/>
</dbReference>
<dbReference type="GO" id="GO:0005802">
    <property type="term" value="C:trans-Golgi network"/>
    <property type="evidence" value="ECO:0007669"/>
    <property type="project" value="Ensembl"/>
</dbReference>
<dbReference type="GO" id="GO:0005506">
    <property type="term" value="F:iron ion binding"/>
    <property type="evidence" value="ECO:0000269"/>
    <property type="project" value="DisProt"/>
</dbReference>
<dbReference type="GO" id="GO:0031418">
    <property type="term" value="F:L-ascorbic acid binding"/>
    <property type="evidence" value="ECO:0007669"/>
    <property type="project" value="UniProtKB-KW"/>
</dbReference>
<dbReference type="GO" id="GO:0046872">
    <property type="term" value="F:metal ion binding"/>
    <property type="evidence" value="ECO:0000269"/>
    <property type="project" value="DisProt"/>
</dbReference>
<dbReference type="GO" id="GO:0050211">
    <property type="term" value="F:procollagen galactosyltransferase activity"/>
    <property type="evidence" value="ECO:0000315"/>
    <property type="project" value="UniProtKB"/>
</dbReference>
<dbReference type="GO" id="GO:0033823">
    <property type="term" value="F:procollagen glucosyltransferase activity"/>
    <property type="evidence" value="ECO:0000315"/>
    <property type="project" value="UniProtKB"/>
</dbReference>
<dbReference type="GO" id="GO:0008475">
    <property type="term" value="F:procollagen-lysine 5-dioxygenase activity"/>
    <property type="evidence" value="ECO:0000314"/>
    <property type="project" value="CAFA"/>
</dbReference>
<dbReference type="GO" id="GO:0036094">
    <property type="term" value="F:small molecule binding"/>
    <property type="evidence" value="ECO:0000269"/>
    <property type="project" value="DisProt"/>
</dbReference>
<dbReference type="GO" id="GO:0070831">
    <property type="term" value="P:basement membrane assembly"/>
    <property type="evidence" value="ECO:0007669"/>
    <property type="project" value="Ensembl"/>
</dbReference>
<dbReference type="GO" id="GO:0030199">
    <property type="term" value="P:collagen fibril organization"/>
    <property type="evidence" value="ECO:0000318"/>
    <property type="project" value="GO_Central"/>
</dbReference>
<dbReference type="GO" id="GO:0032963">
    <property type="term" value="P:collagen metabolic process"/>
    <property type="evidence" value="ECO:0007669"/>
    <property type="project" value="Ensembl"/>
</dbReference>
<dbReference type="GO" id="GO:0001886">
    <property type="term" value="P:endothelial cell morphogenesis"/>
    <property type="evidence" value="ECO:0007669"/>
    <property type="project" value="Ensembl"/>
</dbReference>
<dbReference type="GO" id="GO:0048730">
    <property type="term" value="P:epidermis morphogenesis"/>
    <property type="evidence" value="ECO:0007669"/>
    <property type="project" value="Ensembl"/>
</dbReference>
<dbReference type="GO" id="GO:0046947">
    <property type="term" value="P:hydroxylysine biosynthetic process"/>
    <property type="evidence" value="ECO:0007669"/>
    <property type="project" value="Ensembl"/>
</dbReference>
<dbReference type="GO" id="GO:0001701">
    <property type="term" value="P:in utero embryonic development"/>
    <property type="evidence" value="ECO:0007669"/>
    <property type="project" value="Ensembl"/>
</dbReference>
<dbReference type="GO" id="GO:0060425">
    <property type="term" value="P:lung morphogenesis"/>
    <property type="evidence" value="ECO:0007669"/>
    <property type="project" value="Ensembl"/>
</dbReference>
<dbReference type="GO" id="GO:0021915">
    <property type="term" value="P:neural tube development"/>
    <property type="evidence" value="ECO:0007669"/>
    <property type="project" value="Ensembl"/>
</dbReference>
<dbReference type="GO" id="GO:0017185">
    <property type="term" value="P:peptidyl-lysine hydroxylation"/>
    <property type="evidence" value="ECO:0000314"/>
    <property type="project" value="CAFA"/>
</dbReference>
<dbReference type="GO" id="GO:0008104">
    <property type="term" value="P:protein localization"/>
    <property type="evidence" value="ECO:0007669"/>
    <property type="project" value="Ensembl"/>
</dbReference>
<dbReference type="GO" id="GO:0006493">
    <property type="term" value="P:protein O-linked glycosylation"/>
    <property type="evidence" value="ECO:0000315"/>
    <property type="project" value="CAFA"/>
</dbReference>
<dbReference type="GO" id="GO:0042311">
    <property type="term" value="P:vasodilation"/>
    <property type="evidence" value="ECO:0007669"/>
    <property type="project" value="Ensembl"/>
</dbReference>
<dbReference type="CDD" id="cd23002">
    <property type="entry name" value="GT_LH3"/>
    <property type="match status" value="1"/>
</dbReference>
<dbReference type="FunFam" id="2.60.120.620:FF:000004">
    <property type="entry name" value="Procollagen-lysine,2-oxoglutarate 5-dioxygenase 2"/>
    <property type="match status" value="1"/>
</dbReference>
<dbReference type="Gene3D" id="2.60.120.620">
    <property type="entry name" value="q2cbj1_9rhob like domain"/>
    <property type="match status" value="1"/>
</dbReference>
<dbReference type="InterPro" id="IPR050757">
    <property type="entry name" value="Collagen_mod_GT25"/>
</dbReference>
<dbReference type="InterPro" id="IPR044861">
    <property type="entry name" value="IPNS-like_FE2OG_OXY"/>
</dbReference>
<dbReference type="InterPro" id="IPR029044">
    <property type="entry name" value="Nucleotide-diphossugar_trans"/>
</dbReference>
<dbReference type="InterPro" id="IPR005123">
    <property type="entry name" value="Oxoglu/Fe-dep_dioxygenase_dom"/>
</dbReference>
<dbReference type="InterPro" id="IPR006620">
    <property type="entry name" value="Pro_4_hyd_alph"/>
</dbReference>
<dbReference type="InterPro" id="IPR001006">
    <property type="entry name" value="Procol_lys_dOase"/>
</dbReference>
<dbReference type="PANTHER" id="PTHR10730:SF7">
    <property type="entry name" value="MULTIFUNCTIONAL PROCOLLAGEN LYSINE HYDROXYLASE AND GLYCOSYLTRANSFERASE LH3"/>
    <property type="match status" value="1"/>
</dbReference>
<dbReference type="PANTHER" id="PTHR10730">
    <property type="entry name" value="PROCOLLAGEN-LYSINE,2-OXOGLUTARATE 5-DIOXYGENASE/GLYCOSYLTRANSFERASE 25 FAMILY MEMBER"/>
    <property type="match status" value="1"/>
</dbReference>
<dbReference type="Pfam" id="PF03171">
    <property type="entry name" value="2OG-FeII_Oxy"/>
    <property type="match status" value="1"/>
</dbReference>
<dbReference type="Pfam" id="PF25342">
    <property type="entry name" value="GT_PLOD"/>
    <property type="match status" value="1"/>
</dbReference>
<dbReference type="SMART" id="SM00702">
    <property type="entry name" value="P4Hc"/>
    <property type="match status" value="1"/>
</dbReference>
<dbReference type="SUPFAM" id="SSF53448">
    <property type="entry name" value="Nucleotide-diphospho-sugar transferases"/>
    <property type="match status" value="1"/>
</dbReference>
<dbReference type="PROSITE" id="PS51471">
    <property type="entry name" value="FE2OG_OXY"/>
    <property type="match status" value="1"/>
</dbReference>
<dbReference type="PROSITE" id="PS01325">
    <property type="entry name" value="LYS_HYDROXYLASE"/>
    <property type="match status" value="1"/>
</dbReference>
<name>PLOD3_HUMAN</name>
<organism>
    <name type="scientific">Homo sapiens</name>
    <name type="common">Human</name>
    <dbReference type="NCBI Taxonomy" id="9606"/>
    <lineage>
        <taxon>Eukaryota</taxon>
        <taxon>Metazoa</taxon>
        <taxon>Chordata</taxon>
        <taxon>Craniata</taxon>
        <taxon>Vertebrata</taxon>
        <taxon>Euteleostomi</taxon>
        <taxon>Mammalia</taxon>
        <taxon>Eutheria</taxon>
        <taxon>Euarchontoglires</taxon>
        <taxon>Primates</taxon>
        <taxon>Haplorrhini</taxon>
        <taxon>Catarrhini</taxon>
        <taxon>Hominidae</taxon>
        <taxon>Homo</taxon>
    </lineage>
</organism>
<sequence length="738" mass="84785">MTSSGPGPRFLLLLPLLLPPAASASDRPRGRDPVNPEKLLVITVATAETEGYLRFLRSAEFFNYTVRTLGLGEEWRGGDVARTVGGGQKVRWLKKEMEKYADREDMIIMFVDSYDVILAGSPTELLKKFVQSGSRLLFSAESFCWPEWGLAEQYPEVGTGKRFLNSGGFIGFATTIHQIVRQWKYKDDDDDQLFYTRLYLDPGLREKLSLNLDHKSRIFQNLNGALDEVVLKFDRNRVRIRNVAYDTLPIVVHGNGPTKLQLNYLGNYVPNGWTPEGGCGFCNQDRRTLPGGQPPPRVFLAVFVEQPTPFLPRFLQRLLLLDYPPDRVTLFLHNNEVFHEPHIADSWPQLQDHFSAVKLVGPEEALSPGEARDMAMDLCRQDPECEFYFSLDADAVLTNLQTLRILIEENRKVIAPMLSRHGKLWSNFWGALSPDEYYARSEDYVELVQRKRVGVWNVPYISQAYVIRGDTLRMELPQRDVFSGSDTDPDMAFCKSFRDKGIFLHLSNQHEFGRLLATSRYDTEHLHPDLWQIFDNPVDWKEQYIHENYSRALEGEGIVEQPCPDVYWFPLLSEQMCDELVAEMEHYGQWSGGRHEDSRLAGGYENVPTVDIHMKQVGYEDQWLQLLRTYVGPMTESLFPGYHTKARAVMNFVVRYRPDEQPSLRPHHDSSTFTLNVALNHKGLDYEGGGCRFLRYDCVISSPRKGWALLHPGRLTHYHEGLPTTWGTRYIMVSFVDP</sequence>
<accession>O60568</accession>
<accession>B2R6W6</accession>
<accession>Q540C3</accession>
<proteinExistence type="evidence at protein level"/>
<keyword id="KW-0002">3D-structure</keyword>
<keyword id="KW-0223">Dioxygenase</keyword>
<keyword id="KW-0225">Disease variant</keyword>
<keyword id="KW-1015">Disulfide bond</keyword>
<keyword id="KW-0256">Endoplasmic reticulum</keyword>
<keyword id="KW-0325">Glycoprotein</keyword>
<keyword id="KW-0328">Glycosyltransferase</keyword>
<keyword id="KW-0408">Iron</keyword>
<keyword id="KW-0464">Manganese</keyword>
<keyword id="KW-0472">Membrane</keyword>
<keyword id="KW-0479">Metal-binding</keyword>
<keyword id="KW-0511">Multifunctional enzyme</keyword>
<keyword id="KW-0560">Oxidoreductase</keyword>
<keyword id="KW-1267">Proteomics identification</keyword>
<keyword id="KW-1185">Reference proteome</keyword>
<keyword id="KW-0964">Secreted</keyword>
<keyword id="KW-0732">Signal</keyword>
<keyword id="KW-0808">Transferase</keyword>
<keyword id="KW-0847">Vitamin C</keyword>
<reference key="1">
    <citation type="journal article" date="1998" name="J. Biol. Chem.">
        <title>Primary structure, tissue distribution, and chromosomal localization of a novel isoform of lysyl hydroxylase (lysyl hydroxylase 3).</title>
        <authorList>
            <person name="Valtavaara M."/>
            <person name="Szpirer C."/>
            <person name="Szpirer J."/>
            <person name="Myllylae R."/>
        </authorList>
    </citation>
    <scope>NUCLEOTIDE SEQUENCE [MRNA]</scope>
    <scope>FUNCTION</scope>
    <scope>CATALYTIC ACTIVITY</scope>
    <scope>TISSUE SPECIFICITY</scope>
</reference>
<reference key="2">
    <citation type="journal article" date="1998" name="Proc. Natl. Acad. Sci. U.S.A.">
        <title>Cloning and characterization of a third human lysyl hydroxylase isoform.</title>
        <authorList>
            <person name="Passoja K."/>
            <person name="Rautavuoma K."/>
            <person name="Ala-Kokko L."/>
            <person name="Kosonen T."/>
            <person name="Kivirikko K.I."/>
        </authorList>
    </citation>
    <scope>NUCLEOTIDE SEQUENCE [MRNA]</scope>
    <scope>FUNCTION</scope>
    <scope>CATALYTIC ACTIVITY</scope>
    <scope>COFACTOR</scope>
    <scope>BIOPHYSICOCHEMICAL PROPERTIES</scope>
    <scope>TISSUE SPECIFICITY</scope>
</reference>
<reference key="3">
    <citation type="journal article" date="2000" name="Matrix Biol.">
        <title>Complete exon-intron organization of the gene for human lysyl hydroxylase 3 (LH3).</title>
        <authorList>
            <person name="Rautavuoma K."/>
            <person name="Passoja K."/>
            <person name="Helaakoski T."/>
            <person name="Kivirikko K.I."/>
        </authorList>
    </citation>
    <scope>NUCLEOTIDE SEQUENCE [GENOMIC DNA]</scope>
</reference>
<reference key="4">
    <citation type="submission" date="2003-01" db="EMBL/GenBank/DDBJ databases">
        <title>A gene upregulated by HBVX and is similar to LH3.</title>
        <authorList>
            <person name="Lian Z."/>
            <person name="Feitelson M."/>
        </authorList>
    </citation>
    <scope>NUCLEOTIDE SEQUENCE [MRNA]</scope>
</reference>
<reference key="5">
    <citation type="journal article" date="2004" name="Nat. Genet.">
        <title>Complete sequencing and characterization of 21,243 full-length human cDNAs.</title>
        <authorList>
            <person name="Ota T."/>
            <person name="Suzuki Y."/>
            <person name="Nishikawa T."/>
            <person name="Otsuki T."/>
            <person name="Sugiyama T."/>
            <person name="Irie R."/>
            <person name="Wakamatsu A."/>
            <person name="Hayashi K."/>
            <person name="Sato H."/>
            <person name="Nagai K."/>
            <person name="Kimura K."/>
            <person name="Makita H."/>
            <person name="Sekine M."/>
            <person name="Obayashi M."/>
            <person name="Nishi T."/>
            <person name="Shibahara T."/>
            <person name="Tanaka T."/>
            <person name="Ishii S."/>
            <person name="Yamamoto J."/>
            <person name="Saito K."/>
            <person name="Kawai Y."/>
            <person name="Isono Y."/>
            <person name="Nakamura Y."/>
            <person name="Nagahari K."/>
            <person name="Murakami K."/>
            <person name="Yasuda T."/>
            <person name="Iwayanagi T."/>
            <person name="Wagatsuma M."/>
            <person name="Shiratori A."/>
            <person name="Sudo H."/>
            <person name="Hosoiri T."/>
            <person name="Kaku Y."/>
            <person name="Kodaira H."/>
            <person name="Kondo H."/>
            <person name="Sugawara M."/>
            <person name="Takahashi M."/>
            <person name="Kanda K."/>
            <person name="Yokoi T."/>
            <person name="Furuya T."/>
            <person name="Kikkawa E."/>
            <person name="Omura Y."/>
            <person name="Abe K."/>
            <person name="Kamihara K."/>
            <person name="Katsuta N."/>
            <person name="Sato K."/>
            <person name="Tanikawa M."/>
            <person name="Yamazaki M."/>
            <person name="Ninomiya K."/>
            <person name="Ishibashi T."/>
            <person name="Yamashita H."/>
            <person name="Murakawa K."/>
            <person name="Fujimori K."/>
            <person name="Tanai H."/>
            <person name="Kimata M."/>
            <person name="Watanabe M."/>
            <person name="Hiraoka S."/>
            <person name="Chiba Y."/>
            <person name="Ishida S."/>
            <person name="Ono Y."/>
            <person name="Takiguchi S."/>
            <person name="Watanabe S."/>
            <person name="Yosida M."/>
            <person name="Hotuta T."/>
            <person name="Kusano J."/>
            <person name="Kanehori K."/>
            <person name="Takahashi-Fujii A."/>
            <person name="Hara H."/>
            <person name="Tanase T.-O."/>
            <person name="Nomura Y."/>
            <person name="Togiya S."/>
            <person name="Komai F."/>
            <person name="Hara R."/>
            <person name="Takeuchi K."/>
            <person name="Arita M."/>
            <person name="Imose N."/>
            <person name="Musashino K."/>
            <person name="Yuuki H."/>
            <person name="Oshima A."/>
            <person name="Sasaki N."/>
            <person name="Aotsuka S."/>
            <person name="Yoshikawa Y."/>
            <person name="Matsunawa H."/>
            <person name="Ichihara T."/>
            <person name="Shiohata N."/>
            <person name="Sano S."/>
            <person name="Moriya S."/>
            <person name="Momiyama H."/>
            <person name="Satoh N."/>
            <person name="Takami S."/>
            <person name="Terashima Y."/>
            <person name="Suzuki O."/>
            <person name="Nakagawa S."/>
            <person name="Senoh A."/>
            <person name="Mizoguchi H."/>
            <person name="Goto Y."/>
            <person name="Shimizu F."/>
            <person name="Wakebe H."/>
            <person name="Hishigaki H."/>
            <person name="Watanabe T."/>
            <person name="Sugiyama A."/>
            <person name="Takemoto M."/>
            <person name="Kawakami B."/>
            <person name="Yamazaki M."/>
            <person name="Watanabe K."/>
            <person name="Kumagai A."/>
            <person name="Itakura S."/>
            <person name="Fukuzumi Y."/>
            <person name="Fujimori Y."/>
            <person name="Komiyama M."/>
            <person name="Tashiro H."/>
            <person name="Tanigami A."/>
            <person name="Fujiwara T."/>
            <person name="Ono T."/>
            <person name="Yamada K."/>
            <person name="Fujii Y."/>
            <person name="Ozaki K."/>
            <person name="Hirao M."/>
            <person name="Ohmori Y."/>
            <person name="Kawabata A."/>
            <person name="Hikiji T."/>
            <person name="Kobatake N."/>
            <person name="Inagaki H."/>
            <person name="Ikema Y."/>
            <person name="Okamoto S."/>
            <person name="Okitani R."/>
            <person name="Kawakami T."/>
            <person name="Noguchi S."/>
            <person name="Itoh T."/>
            <person name="Shigeta K."/>
            <person name="Senba T."/>
            <person name="Matsumura K."/>
            <person name="Nakajima Y."/>
            <person name="Mizuno T."/>
            <person name="Morinaga M."/>
            <person name="Sasaki M."/>
            <person name="Togashi T."/>
            <person name="Oyama M."/>
            <person name="Hata H."/>
            <person name="Watanabe M."/>
            <person name="Komatsu T."/>
            <person name="Mizushima-Sugano J."/>
            <person name="Satoh T."/>
            <person name="Shirai Y."/>
            <person name="Takahashi Y."/>
            <person name="Nakagawa K."/>
            <person name="Okumura K."/>
            <person name="Nagase T."/>
            <person name="Nomura N."/>
            <person name="Kikuchi H."/>
            <person name="Masuho Y."/>
            <person name="Yamashita R."/>
            <person name="Nakai K."/>
            <person name="Yada T."/>
            <person name="Nakamura Y."/>
            <person name="Ohara O."/>
            <person name="Isogai T."/>
            <person name="Sugano S."/>
        </authorList>
    </citation>
    <scope>NUCLEOTIDE SEQUENCE [LARGE SCALE MRNA]</scope>
    <source>
        <tissue>Small intestine</tissue>
    </source>
</reference>
<reference key="6">
    <citation type="journal article" date="2003" name="Nature">
        <title>The DNA sequence of human chromosome 7.</title>
        <authorList>
            <person name="Hillier L.W."/>
            <person name="Fulton R.S."/>
            <person name="Fulton L.A."/>
            <person name="Graves T.A."/>
            <person name="Pepin K.H."/>
            <person name="Wagner-McPherson C."/>
            <person name="Layman D."/>
            <person name="Maas J."/>
            <person name="Jaeger S."/>
            <person name="Walker R."/>
            <person name="Wylie K."/>
            <person name="Sekhon M."/>
            <person name="Becker M.C."/>
            <person name="O'Laughlin M.D."/>
            <person name="Schaller M.E."/>
            <person name="Fewell G.A."/>
            <person name="Delehaunty K.D."/>
            <person name="Miner T.L."/>
            <person name="Nash W.E."/>
            <person name="Cordes M."/>
            <person name="Du H."/>
            <person name="Sun H."/>
            <person name="Edwards J."/>
            <person name="Bradshaw-Cordum H."/>
            <person name="Ali J."/>
            <person name="Andrews S."/>
            <person name="Isak A."/>
            <person name="Vanbrunt A."/>
            <person name="Nguyen C."/>
            <person name="Du F."/>
            <person name="Lamar B."/>
            <person name="Courtney L."/>
            <person name="Kalicki J."/>
            <person name="Ozersky P."/>
            <person name="Bielicki L."/>
            <person name="Scott K."/>
            <person name="Holmes A."/>
            <person name="Harkins R."/>
            <person name="Harris A."/>
            <person name="Strong C.M."/>
            <person name="Hou S."/>
            <person name="Tomlinson C."/>
            <person name="Dauphin-Kohlberg S."/>
            <person name="Kozlowicz-Reilly A."/>
            <person name="Leonard S."/>
            <person name="Rohlfing T."/>
            <person name="Rock S.M."/>
            <person name="Tin-Wollam A.-M."/>
            <person name="Abbott A."/>
            <person name="Minx P."/>
            <person name="Maupin R."/>
            <person name="Strowmatt C."/>
            <person name="Latreille P."/>
            <person name="Miller N."/>
            <person name="Johnson D."/>
            <person name="Murray J."/>
            <person name="Woessner J.P."/>
            <person name="Wendl M.C."/>
            <person name="Yang S.-P."/>
            <person name="Schultz B.R."/>
            <person name="Wallis J.W."/>
            <person name="Spieth J."/>
            <person name="Bieri T.A."/>
            <person name="Nelson J.O."/>
            <person name="Berkowicz N."/>
            <person name="Wohldmann P.E."/>
            <person name="Cook L.L."/>
            <person name="Hickenbotham M.T."/>
            <person name="Eldred J."/>
            <person name="Williams D."/>
            <person name="Bedell J.A."/>
            <person name="Mardis E.R."/>
            <person name="Clifton S.W."/>
            <person name="Chissoe S.L."/>
            <person name="Marra M.A."/>
            <person name="Raymond C."/>
            <person name="Haugen E."/>
            <person name="Gillett W."/>
            <person name="Zhou Y."/>
            <person name="James R."/>
            <person name="Phelps K."/>
            <person name="Iadanoto S."/>
            <person name="Bubb K."/>
            <person name="Simms E."/>
            <person name="Levy R."/>
            <person name="Clendenning J."/>
            <person name="Kaul R."/>
            <person name="Kent W.J."/>
            <person name="Furey T.S."/>
            <person name="Baertsch R.A."/>
            <person name="Brent M.R."/>
            <person name="Keibler E."/>
            <person name="Flicek P."/>
            <person name="Bork P."/>
            <person name="Suyama M."/>
            <person name="Bailey J.A."/>
            <person name="Portnoy M.E."/>
            <person name="Torrents D."/>
            <person name="Chinwalla A.T."/>
            <person name="Gish W.R."/>
            <person name="Eddy S.R."/>
            <person name="McPherson J.D."/>
            <person name="Olson M.V."/>
            <person name="Eichler E.E."/>
            <person name="Green E.D."/>
            <person name="Waterston R.H."/>
            <person name="Wilson R.K."/>
        </authorList>
    </citation>
    <scope>NUCLEOTIDE SEQUENCE [LARGE SCALE GENOMIC DNA]</scope>
</reference>
<reference key="7">
    <citation type="submission" date="2005-07" db="EMBL/GenBank/DDBJ databases">
        <authorList>
            <person name="Mural R.J."/>
            <person name="Istrail S."/>
            <person name="Sutton G.G."/>
            <person name="Florea L."/>
            <person name="Halpern A.L."/>
            <person name="Mobarry C.M."/>
            <person name="Lippert R."/>
            <person name="Walenz B."/>
            <person name="Shatkay H."/>
            <person name="Dew I."/>
            <person name="Miller J.R."/>
            <person name="Flanigan M.J."/>
            <person name="Edwards N.J."/>
            <person name="Bolanos R."/>
            <person name="Fasulo D."/>
            <person name="Halldorsson B.V."/>
            <person name="Hannenhalli S."/>
            <person name="Turner R."/>
            <person name="Yooseph S."/>
            <person name="Lu F."/>
            <person name="Nusskern D.R."/>
            <person name="Shue B.C."/>
            <person name="Zheng X.H."/>
            <person name="Zhong F."/>
            <person name="Delcher A.L."/>
            <person name="Huson D.H."/>
            <person name="Kravitz S.A."/>
            <person name="Mouchard L."/>
            <person name="Reinert K."/>
            <person name="Remington K.A."/>
            <person name="Clark A.G."/>
            <person name="Waterman M.S."/>
            <person name="Eichler E.E."/>
            <person name="Adams M.D."/>
            <person name="Hunkapiller M.W."/>
            <person name="Myers E.W."/>
            <person name="Venter J.C."/>
        </authorList>
    </citation>
    <scope>NUCLEOTIDE SEQUENCE [LARGE SCALE GENOMIC DNA]</scope>
</reference>
<reference key="8">
    <citation type="journal article" date="2004" name="Genome Res.">
        <title>The status, quality, and expansion of the NIH full-length cDNA project: the Mammalian Gene Collection (MGC).</title>
        <authorList>
            <consortium name="The MGC Project Team"/>
        </authorList>
    </citation>
    <scope>NUCLEOTIDE SEQUENCE [LARGE SCALE MRNA]</scope>
    <source>
        <tissue>Pancreas</tissue>
    </source>
</reference>
<reference key="9">
    <citation type="journal article" date="2000" name="J. Biol. Chem.">
        <title>Lysyl hydroxylase 3 is a multifunctional protein possessing collagen glucosyltransferase activity.</title>
        <authorList>
            <person name="Heikkinen J."/>
            <person name="Risteli M."/>
            <person name="Wang C."/>
            <person name="Latvala J."/>
            <person name="Rossi M."/>
            <person name="Valtavaara M."/>
            <person name="Myllylae R."/>
        </authorList>
    </citation>
    <scope>FUNCTION</scope>
    <scope>CATALYTIC ACTIVITY</scope>
    <scope>SUBCELLULAR LOCATION</scope>
    <scope>MUTAGENESIS OF ASP-669</scope>
</reference>
<reference key="10">
    <citation type="journal article" date="2002" name="J. Biol. Chem.">
        <title>Identification of amino acids important for the catalytic activity of the collagen glucosyltransferase associated with the multifunctional lysyl hydroxylase 3 (LH3).</title>
        <authorList>
            <person name="Wang C."/>
            <person name="Risteli M."/>
            <person name="Heikkinen J."/>
            <person name="Hussa A.K."/>
            <person name="Uitto L."/>
            <person name="Myllyla R."/>
        </authorList>
    </citation>
    <scope>CATALYTIC ACTIVITY</scope>
    <scope>MUTAGENESIS OF CYS-144; 187-ASP--ASP-189; 187-ASP--ASP-191 AND LEU-208</scope>
</reference>
<reference key="11">
    <citation type="journal article" date="2002" name="J. Biol. Chem.">
        <title>Characterization of three fragments that constitute the monomers of the human lysyl hydroxylase isoenzymes 1-3. The 30-kDa N-terminal fragment is not required for lysyl hydroxylase activity.</title>
        <authorList>
            <person name="Rautavuoma K."/>
            <person name="Takaluoma K."/>
            <person name="Passoja K."/>
            <person name="Pirskanen A."/>
            <person name="Kvist A.P."/>
            <person name="Kivirikko K.I."/>
            <person name="Myllyharju J."/>
        </authorList>
    </citation>
    <scope>CATALYTIC ACTIVITY</scope>
    <scope>FUNCTION</scope>
    <scope>BIOPHYSICOCHEMICAL PROPERTIES</scope>
</reference>
<reference key="12">
    <citation type="journal article" date="2002" name="Matrix Biol.">
        <title>The third activity for lysyl hydroxylase 3: galactosylation of hydroxylysyl residues in collagens in vitro.</title>
        <authorList>
            <person name="Wang C."/>
            <person name="Luosujaervi H."/>
            <person name="Heikkinen J."/>
            <person name="Risteli M."/>
            <person name="Uitto L."/>
            <person name="Myllylae R."/>
        </authorList>
    </citation>
    <scope>FUNCTION</scope>
    <scope>CATALYTIC ACTIVITY</scope>
    <scope>BIOPHYSICOCHEMICAL PROPERTIES</scope>
    <scope>MUTAGENESIS OF CYS-144; 187-ASP--ASP-189 AND 187-ASP--ASP-191</scope>
</reference>
<reference key="13">
    <citation type="journal article" date="2009" name="J. Cell. Mol. Med.">
        <title>The glycosyltransferase activities of lysyl hydroxylase 3 (LH3) in the extracellular space are important for cell growth and viability.</title>
        <authorList>
            <person name="Wang C."/>
            <person name="Kovanen V."/>
            <person name="Raudasoja P."/>
            <person name="Eskelinen S."/>
            <person name="Pospiech H."/>
            <person name="Myllylae R."/>
        </authorList>
    </citation>
    <scope>FUNCTION</scope>
    <scope>CATALYTIC ACTIVITY</scope>
    <scope>MUTAGENESIS OF 187-ASP--ASP-191 AND ASP-669</scope>
</reference>
<reference key="14">
    <citation type="journal article" date="2010" name="BMC Cell Biol.">
        <title>The human collagen beta(1-O)galactosyltransferase, GLT25D1, is a soluble endoplasmic reticulum localized protein.</title>
        <authorList>
            <person name="Liefhebber J.M."/>
            <person name="Punt S."/>
            <person name="Spaan W.J."/>
            <person name="van Leeuwen H.C."/>
        </authorList>
    </citation>
    <scope>SUBCELLULAR LOCATION</scope>
</reference>
<reference key="15">
    <citation type="journal article" date="2011" name="BMC Syst. Biol.">
        <title>Initial characterization of the human central proteome.</title>
        <authorList>
            <person name="Burkard T.R."/>
            <person name="Planyavsky M."/>
            <person name="Kaupe I."/>
            <person name="Breitwieser F.P."/>
            <person name="Buerckstuemmer T."/>
            <person name="Bennett K.L."/>
            <person name="Superti-Furga G."/>
            <person name="Colinge J."/>
        </authorList>
    </citation>
    <scope>IDENTIFICATION BY MASS SPECTROMETRY [LARGE SCALE ANALYSIS]</scope>
</reference>
<reference key="16">
    <citation type="journal article" date="2012" name="J. Cell. Physiol.">
        <title>Lysyl hydroxylase 3 is secreted from cells by two pathways.</title>
        <authorList>
            <person name="Wang C."/>
            <person name="Ristiluoma M.M."/>
            <person name="Salo A.M."/>
            <person name="Eskelinen S."/>
            <person name="Myllylae R."/>
        </authorList>
    </citation>
    <scope>SUBCELLULAR LOCATION</scope>
</reference>
<reference key="17">
    <citation type="journal article" date="2014" name="PLoS ONE">
        <title>Lysyl hydroxylase 3 modifies lysine residues to facilitate oligomerization of mannan-binding lectin.</title>
        <authorList>
            <person name="Risteli M."/>
            <person name="Ruotsalainen H."/>
            <person name="Bergmann U."/>
            <person name="Venkatraman Girija U."/>
            <person name="Wallis R."/>
            <person name="Myllylae R."/>
        </authorList>
    </citation>
    <scope>FUNCTION</scope>
</reference>
<reference key="18">
    <citation type="journal article" date="2015" name="Proteomics">
        <title>N-terminome analysis of the human mitochondrial proteome.</title>
        <authorList>
            <person name="Vaca Jacome A.S."/>
            <person name="Rabilloud T."/>
            <person name="Schaeffer-Reiss C."/>
            <person name="Rompais M."/>
            <person name="Ayoub D."/>
            <person name="Lane L."/>
            <person name="Bairoch A."/>
            <person name="Van Dorsselaer A."/>
            <person name="Carapito C."/>
        </authorList>
    </citation>
    <scope>IDENTIFICATION BY MASS SPECTROMETRY [LARGE SCALE ANALYSIS]</scope>
</reference>
<reference evidence="21 22 23 24 25 26" key="19">
    <citation type="journal article" date="2018" name="Nat. Commun.">
        <title>Molecular architecture of the multifunctional collagen lysyl hydroxylase and glycosyltransferase LH3.</title>
        <authorList>
            <person name="Scietti L."/>
            <person name="Chiapparino A."/>
            <person name="De Giorgi F."/>
            <person name="Fumagalli M."/>
            <person name="Khoriauli L."/>
            <person name="Nergadze S."/>
            <person name="Basu S."/>
            <person name="Olieric V."/>
            <person name="Cucca L."/>
            <person name="Banushi B."/>
            <person name="Profumo A."/>
            <person name="Giulotto E."/>
            <person name="Gissen P."/>
            <person name="Forneris F."/>
        </authorList>
    </citation>
    <scope>X-RAY CRYSTALLOGRAPHY (2.1 ANGSTROMS) OF 25-738 IN COMPLEXES WITH IRON; 2-OXOGLUTARATE; MANGANESE AND UDP</scope>
    <scope>CATALYTIC ACTIVITY</scope>
    <scope>FUNCTION</scope>
    <scope>COFACTOR</scope>
    <scope>SUBUNIT</scope>
    <scope>DOMAIN</scope>
    <scope>GLYCOSYLATION AT ASN-63 AND ASN-548</scope>
    <scope>DISULFIDE BONDS</scope>
    <scope>CHARACTERIZATION OF VARIANT BCARD SER-223</scope>
    <scope>MUTAGENESIS OF TRP-75; TYR-114; THR-672; ARG-714 AND LEU-715</scope>
</reference>
<reference key="20">
    <citation type="journal article" date="2008" name="Am. J. Hum. Genet.">
        <title>A connective tissue disorder caused by mutations of the lysyl hydroxylase 3 gene.</title>
        <authorList>
            <person name="Salo A.M."/>
            <person name="Cox H."/>
            <person name="Farndon P."/>
            <person name="Moss C."/>
            <person name="Grindulis H."/>
            <person name="Risteli M."/>
            <person name="Robins S.P."/>
            <person name="Myllylae R."/>
        </authorList>
    </citation>
    <scope>VARIANT BCARD SER-223</scope>
    <scope>CHARACTERIZATION OF VARIANT BCARD SER-223</scope>
    <scope>CATALYTIC ACTIVITY</scope>
    <scope>FUNCTION</scope>
</reference>
<reference key="21">
    <citation type="journal article" date="2019" name="Genet. Med.">
        <title>Autozygome and high throughput confirmation of disease genes candidacy.</title>
        <authorList>
            <person name="Maddirevula S."/>
            <person name="Alzahrani F."/>
            <person name="Al-Owain M."/>
            <person name="Al Muhaizea M.A."/>
            <person name="Kayyali H.R."/>
            <person name="AlHashem A."/>
            <person name="Rahbeeni Z."/>
            <person name="Al-Otaibi M."/>
            <person name="Alzaidan H.I."/>
            <person name="Balobaid A."/>
            <person name="El Khashab H.Y."/>
            <person name="Bubshait D.K."/>
            <person name="Faden M."/>
            <person name="Yamani S.A."/>
            <person name="Dabbagh O."/>
            <person name="Al-Mureikhi M."/>
            <person name="Jasser A.A."/>
            <person name="Alsaif H.S."/>
            <person name="Alluhaydan I."/>
            <person name="Seidahmed M.Z."/>
            <person name="Alabbasi B.H."/>
            <person name="Almogarri I."/>
            <person name="Kurdi W."/>
            <person name="Akleh H."/>
            <person name="Qari A."/>
            <person name="Al Tala S.M."/>
            <person name="Alhomaidi S."/>
            <person name="Kentab A.Y."/>
            <person name="Salih M.A."/>
            <person name="Chedrawi A."/>
            <person name="Alameer S."/>
            <person name="Tabarki B."/>
            <person name="Shamseldin H.E."/>
            <person name="Patel N."/>
            <person name="Ibrahim N."/>
            <person name="Abdulwahab F."/>
            <person name="Samira M."/>
            <person name="Goljan E."/>
            <person name="Abouelhoda M."/>
            <person name="Meyer B.F."/>
            <person name="Hashem M."/>
            <person name="Shaheen R."/>
            <person name="AlShahwan S."/>
            <person name="Alfadhel M."/>
            <person name="Ben-Omran T."/>
            <person name="Al-Qattan M.M."/>
            <person name="Monies D."/>
            <person name="Alkuraya F.S."/>
        </authorList>
    </citation>
    <scope>VARIANT BCARD 452-ARG--PRO-738 DEL</scope>
</reference>
<comment type="function">
    <text evidence="1 4 5 6 7 8 9 12 13 15 16 20">Multifunctional enzyme that catalyzes a series of essential post-translational modifications on Lys residues in procollagen (PubMed:11956192, PubMed:12475640, PubMed:18298658, PubMed:18834968, PubMed:30089812). Plays a redundant role in catalyzing the formation of hydroxylysine residues in -Xaa-Lys-Gly- sequences in collagens (PubMed:11956192, PubMed:12475640, PubMed:18298658, PubMed:18834968, PubMed:30089812, PubMed:9582318, PubMed:9724729). Plays a redundant role in catalyzing the transfer of galactose onto hydroxylysine groups, giving rise to galactosyl 5-hydroxylysine (PubMed:12475640, PubMed:18298658, PubMed:18834968, PubMed:30089812). Has an essential role by catalyzing the subsequent transfer of glucose moieties, giving rise to 1,2-glucosylgalactosyl-5-hydroxylysine residues (PubMed:10934207, PubMed:11896059, PubMed:11956192, PubMed:12475640, PubMed:18298658, PubMed:18834968, PubMed:30089812). Catalyzes hydroxylation and glycosylation of Lys residues in the MBL1 collagen-like domain, giving rise to hydroxylysine and 1,2-glucosylgalactosyl-5-hydroxylysine residues (PubMed:25419660). Essential for normal biosynthesis and secretion of type IV collagens (Probable) (PubMed:18834968). Essential for normal formation of basement membranes (By similarity).</text>
</comment>
<comment type="catalytic activity">
    <reaction evidence="4 6 7 8 9 13 15 16">
        <text>L-lysyl-[collagen] + 2-oxoglutarate + O2 = (5R)-5-hydroxy-L-lysyl-[collagen] + succinate + CO2</text>
        <dbReference type="Rhea" id="RHEA:16569"/>
        <dbReference type="Rhea" id="RHEA-COMP:12751"/>
        <dbReference type="Rhea" id="RHEA-COMP:12752"/>
        <dbReference type="ChEBI" id="CHEBI:15379"/>
        <dbReference type="ChEBI" id="CHEBI:16526"/>
        <dbReference type="ChEBI" id="CHEBI:16810"/>
        <dbReference type="ChEBI" id="CHEBI:29969"/>
        <dbReference type="ChEBI" id="CHEBI:30031"/>
        <dbReference type="ChEBI" id="CHEBI:133442"/>
        <dbReference type="EC" id="1.14.11.4"/>
    </reaction>
</comment>
<comment type="catalytic activity">
    <reaction evidence="7 8 9 13">
        <text>(5R)-5-hydroxy-L-lysyl-[collagen] + UDP-alpha-D-galactose = (5R)-5-O-(beta-D-galactosyl)-5-hydroxy-L-lysyl-[collagen] + UDP + H(+)</text>
        <dbReference type="Rhea" id="RHEA:12637"/>
        <dbReference type="Rhea" id="RHEA-COMP:12752"/>
        <dbReference type="Rhea" id="RHEA-COMP:12753"/>
        <dbReference type="ChEBI" id="CHEBI:15378"/>
        <dbReference type="ChEBI" id="CHEBI:58223"/>
        <dbReference type="ChEBI" id="CHEBI:66914"/>
        <dbReference type="ChEBI" id="CHEBI:133442"/>
        <dbReference type="ChEBI" id="CHEBI:133443"/>
        <dbReference type="EC" id="2.4.1.50"/>
    </reaction>
</comment>
<comment type="catalytic activity">
    <reaction evidence="4 5 6 7 8 9 13">
        <text>(5R)-5-O-(beta-D-galactosyl)-5-hydroxy-L-lysyl-[collagen] + UDP-alpha-D-glucose = (5R)-5-O-[alpha-D-glucosyl-(1-&gt;2)-beta-D-galactosyl]-5-hydroxy-L-lysyl-[collagen] + UDP + H(+)</text>
        <dbReference type="Rhea" id="RHEA:12576"/>
        <dbReference type="Rhea" id="RHEA-COMP:12753"/>
        <dbReference type="Rhea" id="RHEA-COMP:12754"/>
        <dbReference type="ChEBI" id="CHEBI:15378"/>
        <dbReference type="ChEBI" id="CHEBI:58223"/>
        <dbReference type="ChEBI" id="CHEBI:58885"/>
        <dbReference type="ChEBI" id="CHEBI:133443"/>
        <dbReference type="ChEBI" id="CHEBI:133452"/>
        <dbReference type="EC" id="2.4.1.66"/>
    </reaction>
</comment>
<comment type="cofactor">
    <cofactor evidence="13 16">
        <name>Fe(2+)</name>
        <dbReference type="ChEBI" id="CHEBI:29033"/>
    </cofactor>
</comment>
<comment type="cofactor">
    <cofactor evidence="13 16">
        <name>L-ascorbate</name>
        <dbReference type="ChEBI" id="CHEBI:38290"/>
    </cofactor>
</comment>
<comment type="cofactor">
    <cofactor evidence="13">
        <name>Mn(2+)</name>
        <dbReference type="ChEBI" id="CHEBI:29035"/>
    </cofactor>
</comment>
<comment type="activity regulation">
    <text evidence="4">Lysyl hydroxylase activity is strongly inhibited by imidazole.</text>
</comment>
<comment type="biophysicochemical properties">
    <kinetics>
        <KM evidence="7">35 uM for UDP-galactose</KM>
        <KM evidence="7">17 uM for UDP-glucose</KM>
        <KM evidence="6 16">100 uM for 2-oxoglutarate</KM>
        <KM evidence="16">300 uM for ascorbate</KM>
        <KM evidence="6">350 uM for ascorbate</KM>
    </kinetics>
</comment>
<comment type="subunit">
    <text evidence="13">Homodimer.</text>
</comment>
<comment type="interaction">
    <interactant intactId="EBI-741582">
        <id>O60568</id>
    </interactant>
    <interactant intactId="EBI-945751">
        <id>P38432</id>
        <label>COIL</label>
    </interactant>
    <organismsDiffer>false</organismsDiffer>
    <experiments>3</experiments>
</comment>
<comment type="interaction">
    <interactant intactId="EBI-741582">
        <id>O60568</id>
    </interactant>
    <interactant intactId="EBI-2528742">
        <id>Q9UMD9</id>
        <label>COL17A1</label>
    </interactant>
    <organismsDiffer>false</organismsDiffer>
    <experiments>3</experiments>
</comment>
<comment type="interaction">
    <interactant intactId="EBI-741582">
        <id>O60568</id>
    </interactant>
    <interactant intactId="EBI-12925520">
        <id>Q6Q6R5-3</id>
        <label>CRIP3</label>
    </interactant>
    <organismsDiffer>false</organismsDiffer>
    <experiments>3</experiments>
</comment>
<comment type="interaction">
    <interactant intactId="EBI-741582">
        <id>O60568</id>
    </interactant>
    <interactant intactId="EBI-2349927">
        <id>Q5JST6</id>
        <label>EFHC2</label>
    </interactant>
    <organismsDiffer>false</organismsDiffer>
    <experiments>12</experiments>
</comment>
<comment type="interaction">
    <interactant intactId="EBI-741582">
        <id>O60568</id>
    </interactant>
    <interactant intactId="EBI-10174566">
        <id>A2ABF9</id>
        <label>EHMT2</label>
    </interactant>
    <organismsDiffer>false</organismsDiffer>
    <experiments>3</experiments>
</comment>
<comment type="interaction">
    <interactant intactId="EBI-741582">
        <id>O60568</id>
    </interactant>
    <interactant intactId="EBI-744366">
        <id>Q96KQ7</id>
        <label>EHMT2</label>
    </interactant>
    <organismsDiffer>false</organismsDiffer>
    <experiments>8</experiments>
</comment>
<comment type="interaction">
    <interactant intactId="EBI-741582">
        <id>O60568</id>
    </interactant>
    <interactant intactId="EBI-747509">
        <id>Q9UHH9</id>
        <label>IP6K2</label>
    </interactant>
    <organismsDiffer>false</organismsDiffer>
    <experiments>3</experiments>
</comment>
<comment type="interaction">
    <interactant intactId="EBI-741582">
        <id>O60568</id>
    </interactant>
    <interactant intactId="EBI-4397613">
        <id>Q7L273</id>
        <label>KCTD9</label>
    </interactant>
    <organismsDiffer>false</organismsDiffer>
    <experiments>3</experiments>
</comment>
<comment type="interaction">
    <interactant intactId="EBI-741582">
        <id>O60568</id>
    </interactant>
    <interactant intactId="EBI-6148525">
        <id>O15037</id>
        <label>KHNYN</label>
    </interactant>
    <organismsDiffer>false</organismsDiffer>
    <experiments>3</experiments>
</comment>
<comment type="interaction">
    <interactant intactId="EBI-741582">
        <id>O60568</id>
    </interactant>
    <interactant intactId="EBI-11985629">
        <id>Q96JM7-2</id>
        <label>L3MBTL3</label>
    </interactant>
    <organismsDiffer>false</organismsDiffer>
    <experiments>3</experiments>
</comment>
<comment type="interaction">
    <interactant intactId="EBI-741582">
        <id>O60568</id>
    </interactant>
    <interactant intactId="EBI-8641936">
        <id>Q15742</id>
        <label>NAB2</label>
    </interactant>
    <organismsDiffer>false</organismsDiffer>
    <experiments>3</experiments>
</comment>
<comment type="interaction">
    <interactant intactId="EBI-741582">
        <id>O60568</id>
    </interactant>
    <interactant intactId="EBI-747844">
        <id>Q96QF0</id>
        <label>RAB3IP</label>
    </interactant>
    <organismsDiffer>false</organismsDiffer>
    <experiments>4</experiments>
</comment>
<comment type="interaction">
    <interactant intactId="EBI-741582">
        <id>O60568</id>
    </interactant>
    <interactant intactId="EBI-747865">
        <id>Q96QF0-2</id>
        <label>RAB3IP</label>
    </interactant>
    <organismsDiffer>false</organismsDiffer>
    <experiments>3</experiments>
</comment>
<comment type="interaction">
    <interactant intactId="EBI-741582">
        <id>O60568</id>
    </interactant>
    <interactant intactId="EBI-9512693">
        <id>Q53GL6</id>
        <label>RALY</label>
    </interactant>
    <organismsDiffer>false</organismsDiffer>
    <experiments>3</experiments>
</comment>
<comment type="interaction">
    <interactant intactId="EBI-741582">
        <id>O60568</id>
    </interactant>
    <interactant intactId="EBI-372094">
        <id>Q9BQY4</id>
        <label>RHOXF2</label>
    </interactant>
    <organismsDiffer>false</organismsDiffer>
    <experiments>2</experiments>
</comment>
<comment type="interaction">
    <interactant intactId="EBI-741582">
        <id>O60568</id>
    </interactant>
    <interactant intactId="EBI-741237">
        <id>O60504</id>
        <label>SORBS3</label>
    </interactant>
    <organismsDiffer>false</organismsDiffer>
    <experiments>3</experiments>
</comment>
<comment type="interaction">
    <interactant intactId="EBI-741582">
        <id>O60568</id>
    </interactant>
    <interactant intactId="EBI-4395669">
        <id>Q6ZNG0</id>
        <label>ZNF620</label>
    </interactant>
    <organismsDiffer>false</organismsDiffer>
    <experiments>3</experiments>
</comment>
<comment type="subcellular location">
    <subcellularLocation>
        <location evidence="4">Rough endoplasmic reticulum</location>
    </subcellularLocation>
    <subcellularLocation>
        <location evidence="10">Endoplasmic reticulum lumen</location>
    </subcellularLocation>
    <subcellularLocation>
        <location evidence="1">Endoplasmic reticulum membrane</location>
        <topology evidence="1">Peripheral membrane protein</topology>
        <orientation evidence="1">Lumenal side</orientation>
    </subcellularLocation>
    <subcellularLocation>
        <location evidence="11">Secreted</location>
    </subcellularLocation>
    <subcellularLocation>
        <location evidence="1">Secreted</location>
        <location evidence="1">Extracellular space</location>
    </subcellularLocation>
    <text evidence="1">The majority of the secreted protein is associated with the extracellular matrix.</text>
</comment>
<comment type="tissue specificity">
    <text evidence="15 16">Ubiquitous (PubMed:9724729). Detected in heart, placenta and pancreas and at lower levels in lung, liver and skeletal muscle (PubMed:9582318, PubMed:9724729).</text>
</comment>
<comment type="domain">
    <text evidence="13">The N-terminal domain mediates glycosyltransferase activity.</text>
</comment>
<comment type="domain">
    <text evidence="13">The C-terminal domain that mediates lysyl hydroxylase activity is also important for homodimerization.</text>
</comment>
<comment type="disease" evidence="9 13 14">
    <disease id="DI-01923">
        <name>BCARD syndrome</name>
        <acronym>BCARD</acronym>
        <description>An autosomal recessive connective tissue disorder, secondary to lysyl hydroxylase 3 deficiency. It is characterized by congenital malformations severely affecting multiple tissues and organs. Clinical features include growth retardation, craniofacial dysmorphism, popliteal and cerebral aneurysm, cerebral arterial hemorrhage, skin blistering and easy bruisability, and osteopenia.</description>
        <dbReference type="MIM" id="612394"/>
    </disease>
    <text>The disease is caused by variants affecting the gene represented in this entry.</text>
</comment>
<evidence type="ECO:0000250" key="1">
    <source>
        <dbReference type="UniProtKB" id="Q9R0E1"/>
    </source>
</evidence>
<evidence type="ECO:0000255" key="2"/>
<evidence type="ECO:0000255" key="3">
    <source>
        <dbReference type="PROSITE-ProRule" id="PRU00805"/>
    </source>
</evidence>
<evidence type="ECO:0000269" key="4">
    <source>
    </source>
</evidence>
<evidence type="ECO:0000269" key="5">
    <source>
    </source>
</evidence>
<evidence type="ECO:0000269" key="6">
    <source>
    </source>
</evidence>
<evidence type="ECO:0000269" key="7">
    <source>
    </source>
</evidence>
<evidence type="ECO:0000269" key="8">
    <source>
    </source>
</evidence>
<evidence type="ECO:0000269" key="9">
    <source>
    </source>
</evidence>
<evidence type="ECO:0000269" key="10">
    <source>
    </source>
</evidence>
<evidence type="ECO:0000269" key="11">
    <source>
    </source>
</evidence>
<evidence type="ECO:0000269" key="12">
    <source>
    </source>
</evidence>
<evidence type="ECO:0000269" key="13">
    <source>
    </source>
</evidence>
<evidence type="ECO:0000269" key="14">
    <source>
    </source>
</evidence>
<evidence type="ECO:0000269" key="15">
    <source>
    </source>
</evidence>
<evidence type="ECO:0000269" key="16">
    <source>
    </source>
</evidence>
<evidence type="ECO:0000303" key="17">
    <source>
    </source>
</evidence>
<evidence type="ECO:0000303" key="18">
    <source>
    </source>
</evidence>
<evidence type="ECO:0000303" key="19">
    <source>
    </source>
</evidence>
<evidence type="ECO:0000305" key="20"/>
<evidence type="ECO:0007744" key="21">
    <source>
        <dbReference type="PDB" id="6FXK"/>
    </source>
</evidence>
<evidence type="ECO:0007744" key="22">
    <source>
        <dbReference type="PDB" id="6FXM"/>
    </source>
</evidence>
<evidence type="ECO:0007744" key="23">
    <source>
        <dbReference type="PDB" id="6FXR"/>
    </source>
</evidence>
<evidence type="ECO:0007744" key="24">
    <source>
        <dbReference type="PDB" id="6FXT"/>
    </source>
</evidence>
<evidence type="ECO:0007744" key="25">
    <source>
        <dbReference type="PDB" id="6FXX"/>
    </source>
</evidence>
<evidence type="ECO:0007744" key="26">
    <source>
        <dbReference type="PDB" id="6FXY"/>
    </source>
</evidence>
<evidence type="ECO:0007829" key="27">
    <source>
        <dbReference type="PDB" id="6FXK"/>
    </source>
</evidence>
<evidence type="ECO:0007829" key="28">
    <source>
        <dbReference type="PDB" id="6FXM"/>
    </source>
</evidence>
<evidence type="ECO:0007829" key="29">
    <source>
        <dbReference type="PDB" id="6FXR"/>
    </source>
</evidence>
<evidence type="ECO:0007829" key="30">
    <source>
        <dbReference type="PDB" id="6TES"/>
    </source>
</evidence>
<evidence type="ECO:0007829" key="31">
    <source>
        <dbReference type="PDB" id="6TEU"/>
    </source>
</evidence>
<evidence type="ECO:0007829" key="32">
    <source>
        <dbReference type="PDB" id="6WFV"/>
    </source>
</evidence>
<evidence type="ECO:0007829" key="33">
    <source>
        <dbReference type="PDB" id="8ONE"/>
    </source>
</evidence>
<feature type="signal peptide" evidence="2">
    <location>
        <begin position="1"/>
        <end position="24"/>
    </location>
</feature>
<feature type="chain" id="PRO_0000024686" description="Multifunctional procollagen lysine hydroxylase and glycosyltransferase LH3">
    <location>
        <begin position="25"/>
        <end position="738"/>
    </location>
</feature>
<feature type="domain" description="Fe2OG dioxygenase" evidence="3">
    <location>
        <begin position="647"/>
        <end position="738"/>
    </location>
</feature>
<feature type="region of interest" description="Required for glycosyltransferase activity" evidence="8 13">
    <location>
        <begin position="25"/>
        <end position="290"/>
    </location>
</feature>
<feature type="region of interest" description="Accessory region" evidence="13">
    <location>
        <begin position="295"/>
        <end position="520"/>
    </location>
</feature>
<feature type="region of interest" description="Important for dimerization" evidence="13">
    <location>
        <begin position="672"/>
        <end position="715"/>
    </location>
</feature>
<feature type="binding site" evidence="13 26">
    <location>
        <begin position="44"/>
        <end position="46"/>
    </location>
    <ligand>
        <name>UDP</name>
        <dbReference type="ChEBI" id="CHEBI:58223"/>
    </ligand>
</feature>
<feature type="binding site" evidence="13 26">
    <location>
        <begin position="112"/>
        <end position="114"/>
    </location>
    <ligand>
        <name>UDP</name>
        <dbReference type="ChEBI" id="CHEBI:58223"/>
    </ligand>
</feature>
<feature type="binding site" evidence="13 26">
    <location>
        <position position="112"/>
    </location>
    <ligand>
        <name>Mn(2+)</name>
        <dbReference type="ChEBI" id="CHEBI:29035"/>
    </ligand>
</feature>
<feature type="binding site" evidence="13 26">
    <location>
        <position position="115"/>
    </location>
    <ligand>
        <name>Mn(2+)</name>
        <dbReference type="ChEBI" id="CHEBI:29035"/>
    </ligand>
</feature>
<feature type="binding site" evidence="13 26">
    <location>
        <position position="253"/>
    </location>
    <ligand>
        <name>Mn(2+)</name>
        <dbReference type="ChEBI" id="CHEBI:29035"/>
    </ligand>
</feature>
<feature type="binding site" evidence="13 26">
    <location>
        <begin position="256"/>
        <end position="259"/>
    </location>
    <ligand>
        <name>UDP</name>
        <dbReference type="ChEBI" id="CHEBI:58223"/>
    </ligand>
</feature>
<feature type="binding site" evidence="13 26">
    <location>
        <position position="599"/>
    </location>
    <ligand>
        <name>2-oxoglutarate</name>
        <dbReference type="ChEBI" id="CHEBI:16810"/>
    </ligand>
</feature>
<feature type="binding site" evidence="13 26">
    <location>
        <position position="656"/>
    </location>
    <ligand>
        <name>2-oxoglutarate</name>
        <dbReference type="ChEBI" id="CHEBI:16810"/>
    </ligand>
</feature>
<feature type="binding site" evidence="3 13 26">
    <location>
        <position position="667"/>
    </location>
    <ligand>
        <name>Fe cation</name>
        <dbReference type="ChEBI" id="CHEBI:24875"/>
    </ligand>
</feature>
<feature type="binding site" evidence="3 13 26">
    <location>
        <position position="669"/>
    </location>
    <ligand>
        <name>Fe cation</name>
        <dbReference type="ChEBI" id="CHEBI:24875"/>
    </ligand>
</feature>
<feature type="binding site" evidence="13 26">
    <location>
        <position position="676"/>
    </location>
    <ligand>
        <name>2-oxoglutarate</name>
        <dbReference type="ChEBI" id="CHEBI:16810"/>
    </ligand>
</feature>
<feature type="binding site" evidence="3 13 26">
    <location>
        <position position="719"/>
    </location>
    <ligand>
        <name>Fe cation</name>
        <dbReference type="ChEBI" id="CHEBI:24875"/>
    </ligand>
</feature>
<feature type="binding site" evidence="13 26">
    <location>
        <position position="729"/>
    </location>
    <ligand>
        <name>2-oxoglutarate</name>
        <dbReference type="ChEBI" id="CHEBI:16810"/>
    </ligand>
</feature>
<feature type="glycosylation site" description="N-linked (GlcNAc...) asparagine" evidence="13 26">
    <location>
        <position position="63"/>
    </location>
</feature>
<feature type="glycosylation site" description="N-linked (GlcNAc...) asparagine" evidence="13 26">
    <location>
        <position position="548"/>
    </location>
</feature>
<feature type="disulfide bond" evidence="13 26">
    <location>
        <begin position="279"/>
        <end position="282"/>
    </location>
</feature>
<feature type="disulfide bond" evidence="13 26">
    <location>
        <begin position="379"/>
        <end position="385"/>
    </location>
</feature>
<feature type="disulfide bond" evidence="13 26">
    <location>
        <begin position="563"/>
        <end position="698"/>
    </location>
</feature>
<feature type="sequence variant" id="VAR_051708" description="In dbSNP:rs35627324.">
    <original>A</original>
    <variation>V</variation>
    <location>
        <position position="151"/>
    </location>
</feature>
<feature type="sequence variant" id="VAR_054913" description="In BCARD; generates a new glycosylation site; decreases protein stability; strongly decreases lysyl hydroxylase activity and nearly abolishes glycosyltransferase activity; dbSNP:rs121434414." evidence="9 13">
    <original>N</original>
    <variation>S</variation>
    <location>
        <position position="223"/>
    </location>
</feature>
<feature type="sequence variant" id="VAR_012075" description="In dbSNP:rs1134907.">
    <original>R</original>
    <variation>W</variation>
    <location>
        <position position="286"/>
    </location>
</feature>
<feature type="sequence variant" id="VAR_082150" description="In BCARD; uncertain significance." evidence="14">
    <location>
        <begin position="452"/>
        <end position="738"/>
    </location>
</feature>
<feature type="mutagenesis site" description="Decreased lysyl hydroxylase activity and loss of glycosyltransferase activity." evidence="13">
    <original>W</original>
    <variation>A</variation>
    <location>
        <position position="75"/>
    </location>
</feature>
<feature type="mutagenesis site" description="Decreased lysyl hydroxylase and glycosyltransferase activity." evidence="13">
    <original>Y</original>
    <variation>A</variation>
    <location>
        <position position="114"/>
    </location>
</feature>
<feature type="mutagenesis site" description="Strongly reduced glucosyltransferase activity. Strongly reduced galactosyltransferase activity." evidence="5 7">
    <original>C</original>
    <variation>I</variation>
    <location>
        <position position="144"/>
    </location>
</feature>
<feature type="mutagenesis site" description="Loss of glucosyltransferase activity. Loss of galactosyltransferase activity." evidence="5 7 8">
    <original>DDDDD</original>
    <variation>ADAAA</variation>
    <location>
        <begin position="187"/>
        <end position="191"/>
    </location>
</feature>
<feature type="mutagenesis site" description="Nearly abolishes glucosyltransferase activity. Nearly abolishes galactosyltransferase activity." evidence="5 7">
    <original>DDD</original>
    <variation>ADA</variation>
    <location>
        <begin position="187"/>
        <end position="189"/>
    </location>
</feature>
<feature type="mutagenesis site" description="Reduced glucosyltransferase activity." evidence="5">
    <original>L</original>
    <variation>I</variation>
    <location>
        <position position="208"/>
    </location>
</feature>
<feature type="mutagenesis site" description="Strongly decreased lysyl hydroxylase activity. No effect on glycosyltransferase activity." evidence="4 8">
    <original>D</original>
    <variation>A</variation>
    <location>
        <position position="669"/>
    </location>
</feature>
<feature type="mutagenesis site" description="Loss of dimerization. Loss of lysyl hydroxylase activity and decreased glycosyltransferase activity." evidence="13">
    <original>T</original>
    <variation>N</variation>
    <location>
        <position position="672"/>
    </location>
</feature>
<feature type="mutagenesis site" description="Loss of dimerization. Loss of lysyl hydroxylase activity and no effect on glycosyltransferase activity." evidence="13">
    <original>R</original>
    <variation>N</variation>
    <location>
        <position position="714"/>
    </location>
</feature>
<feature type="mutagenesis site" description="No effect on dimerization, lysyl hydroxylase and glycosyltransferase activity." evidence="13">
    <original>L</original>
    <variation>D</variation>
    <location>
        <position position="715"/>
    </location>
</feature>
<feature type="mutagenesis site" description="Loss of lysyl hydroxylase activity and decreased glycosyltransferase activity." evidence="13">
    <original>L</original>
    <variation>R</variation>
    <location>
        <position position="715"/>
    </location>
</feature>
<feature type="helix" evidence="32">
    <location>
        <begin position="36"/>
        <end position="38"/>
    </location>
</feature>
<feature type="strand" evidence="32">
    <location>
        <begin position="39"/>
        <end position="44"/>
    </location>
</feature>
<feature type="helix" evidence="32">
    <location>
        <begin position="50"/>
        <end position="61"/>
    </location>
</feature>
<feature type="strand" evidence="32">
    <location>
        <begin position="66"/>
        <end position="69"/>
    </location>
</feature>
<feature type="strand" evidence="33">
    <location>
        <begin position="71"/>
        <end position="73"/>
    </location>
</feature>
<feature type="turn" evidence="29">
    <location>
        <begin position="80"/>
        <end position="82"/>
    </location>
</feature>
<feature type="helix" evidence="32">
    <location>
        <begin position="87"/>
        <end position="97"/>
    </location>
</feature>
<feature type="helix" evidence="32">
    <location>
        <begin position="98"/>
        <end position="100"/>
    </location>
</feature>
<feature type="strand" evidence="32">
    <location>
        <begin position="107"/>
        <end position="113"/>
    </location>
</feature>
<feature type="strand" evidence="32">
    <location>
        <begin position="116"/>
        <end position="118"/>
    </location>
</feature>
<feature type="helix" evidence="32">
    <location>
        <begin position="122"/>
        <end position="132"/>
    </location>
</feature>
<feature type="strand" evidence="32">
    <location>
        <begin position="135"/>
        <end position="143"/>
    </location>
</feature>
<feature type="helix" evidence="32">
    <location>
        <begin position="148"/>
        <end position="153"/>
    </location>
</feature>
<feature type="strand" evidence="28">
    <location>
        <begin position="158"/>
        <end position="160"/>
    </location>
</feature>
<feature type="strand" evidence="32">
    <location>
        <begin position="163"/>
        <end position="172"/>
    </location>
</feature>
<feature type="helix" evidence="32">
    <location>
        <begin position="173"/>
        <end position="180"/>
    </location>
</feature>
<feature type="strand" evidence="27">
    <location>
        <begin position="187"/>
        <end position="189"/>
    </location>
</feature>
<feature type="helix" evidence="32">
    <location>
        <begin position="191"/>
        <end position="199"/>
    </location>
</feature>
<feature type="helix" evidence="32">
    <location>
        <begin position="202"/>
        <end position="208"/>
    </location>
</feature>
<feature type="strand" evidence="32">
    <location>
        <begin position="210"/>
        <end position="212"/>
    </location>
</feature>
<feature type="strand" evidence="32">
    <location>
        <begin position="217"/>
        <end position="221"/>
    </location>
</feature>
<feature type="turn" evidence="32">
    <location>
        <begin position="223"/>
        <end position="225"/>
    </location>
</feature>
<feature type="helix" evidence="32">
    <location>
        <begin position="226"/>
        <end position="228"/>
    </location>
</feature>
<feature type="strand" evidence="32">
    <location>
        <begin position="229"/>
        <end position="234"/>
    </location>
</feature>
<feature type="strand" evidence="32">
    <location>
        <begin position="237"/>
        <end position="242"/>
    </location>
</feature>
<feature type="turn" evidence="32">
    <location>
        <begin position="243"/>
        <end position="246"/>
    </location>
</feature>
<feature type="strand" evidence="32">
    <location>
        <begin position="250"/>
        <end position="253"/>
    </location>
</feature>
<feature type="helix" evidence="32">
    <location>
        <begin position="256"/>
        <end position="264"/>
    </location>
</feature>
<feature type="turn" evidence="28">
    <location>
        <begin position="267"/>
        <end position="272"/>
    </location>
</feature>
<feature type="turn" evidence="28">
    <location>
        <begin position="275"/>
        <end position="277"/>
    </location>
</feature>
<feature type="strand" evidence="28">
    <location>
        <begin position="278"/>
        <end position="280"/>
    </location>
</feature>
<feature type="helix" evidence="28">
    <location>
        <begin position="281"/>
        <end position="284"/>
    </location>
</feature>
<feature type="strand" evidence="31">
    <location>
        <begin position="291"/>
        <end position="293"/>
    </location>
</feature>
<feature type="strand" evidence="28">
    <location>
        <begin position="298"/>
        <end position="304"/>
    </location>
</feature>
<feature type="helix" evidence="28">
    <location>
        <begin position="311"/>
        <end position="318"/>
    </location>
</feature>
<feature type="strand" evidence="33">
    <location>
        <begin position="321"/>
        <end position="323"/>
    </location>
</feature>
<feature type="helix" evidence="28">
    <location>
        <begin position="325"/>
        <end position="327"/>
    </location>
</feature>
<feature type="strand" evidence="28">
    <location>
        <begin position="328"/>
        <end position="334"/>
    </location>
</feature>
<feature type="helix" evidence="28">
    <location>
        <begin position="337"/>
        <end position="339"/>
    </location>
</feature>
<feature type="helix" evidence="28">
    <location>
        <begin position="340"/>
        <end position="353"/>
    </location>
</feature>
<feature type="strand" evidence="28">
    <location>
        <begin position="354"/>
        <end position="360"/>
    </location>
</feature>
<feature type="helix" evidence="28">
    <location>
        <begin position="362"/>
        <end position="364"/>
    </location>
</feature>
<feature type="helix" evidence="28">
    <location>
        <begin position="368"/>
        <end position="380"/>
    </location>
</feature>
<feature type="strand" evidence="28">
    <location>
        <begin position="387"/>
        <end position="392"/>
    </location>
</feature>
<feature type="strand" evidence="28">
    <location>
        <begin position="395"/>
        <end position="397"/>
    </location>
</feature>
<feature type="helix" evidence="28">
    <location>
        <begin position="402"/>
        <end position="408"/>
    </location>
</feature>
<feature type="strand" evidence="28">
    <location>
        <begin position="412"/>
        <end position="416"/>
    </location>
</feature>
<feature type="strand" evidence="28">
    <location>
        <begin position="418"/>
        <end position="420"/>
    </location>
</feature>
<feature type="strand" evidence="28">
    <location>
        <begin position="426"/>
        <end position="432"/>
    </location>
</feature>
<feature type="strand" evidence="29">
    <location>
        <begin position="436"/>
        <end position="439"/>
    </location>
</feature>
<feature type="helix" evidence="28">
    <location>
        <begin position="444"/>
        <end position="448"/>
    </location>
</feature>
<feature type="strand" evidence="28">
    <location>
        <begin position="454"/>
        <end position="461"/>
    </location>
</feature>
<feature type="strand" evidence="28">
    <location>
        <begin position="463"/>
        <end position="468"/>
    </location>
</feature>
<feature type="helix" evidence="28">
    <location>
        <begin position="469"/>
        <end position="474"/>
    </location>
</feature>
<feature type="strand" evidence="28">
    <location>
        <begin position="484"/>
        <end position="487"/>
    </location>
</feature>
<feature type="helix" evidence="28">
    <location>
        <begin position="489"/>
        <end position="499"/>
    </location>
</feature>
<feature type="strand" evidence="28">
    <location>
        <begin position="504"/>
        <end position="507"/>
    </location>
</feature>
<feature type="strand" evidence="28">
    <location>
        <begin position="513"/>
        <end position="515"/>
    </location>
</feature>
<feature type="strand" evidence="28">
    <location>
        <begin position="525"/>
        <end position="527"/>
    </location>
</feature>
<feature type="helix" evidence="28">
    <location>
        <begin position="528"/>
        <end position="531"/>
    </location>
</feature>
<feature type="turn" evidence="28">
    <location>
        <begin position="533"/>
        <end position="535"/>
    </location>
</feature>
<feature type="helix" evidence="28">
    <location>
        <begin position="537"/>
        <end position="544"/>
    </location>
</feature>
<feature type="helix" evidence="28">
    <location>
        <begin position="549"/>
        <end position="554"/>
    </location>
</feature>
<feature type="strand" evidence="28">
    <location>
        <begin position="560"/>
        <end position="563"/>
    </location>
</feature>
<feature type="strand" evidence="28">
    <location>
        <begin position="566"/>
        <end position="570"/>
    </location>
</feature>
<feature type="helix" evidence="28">
    <location>
        <begin position="574"/>
        <end position="587"/>
    </location>
</feature>
<feature type="strand" evidence="29">
    <location>
        <begin position="599"/>
        <end position="601"/>
    </location>
</feature>
<feature type="strand" evidence="30">
    <location>
        <begin position="602"/>
        <end position="604"/>
    </location>
</feature>
<feature type="strand" evidence="28">
    <location>
        <begin position="610"/>
        <end position="613"/>
    </location>
</feature>
<feature type="helix" evidence="28">
    <location>
        <begin position="614"/>
        <end position="617"/>
    </location>
</feature>
<feature type="helix" evidence="28">
    <location>
        <begin position="620"/>
        <end position="629"/>
    </location>
</feature>
<feature type="helix" evidence="28">
    <location>
        <begin position="631"/>
        <end position="638"/>
    </location>
</feature>
<feature type="strand" evidence="28">
    <location>
        <begin position="648"/>
        <end position="656"/>
    </location>
</feature>
<feature type="strand" evidence="28">
    <location>
        <begin position="658"/>
        <end position="660"/>
    </location>
</feature>
<feature type="strand" evidence="28">
    <location>
        <begin position="664"/>
        <end position="678"/>
    </location>
</feature>
<feature type="turn" evidence="28">
    <location>
        <begin position="683"/>
        <end position="685"/>
    </location>
</feature>
<feature type="strand" evidence="28">
    <location>
        <begin position="686"/>
        <end position="688"/>
    </location>
</feature>
<feature type="strand" evidence="28">
    <location>
        <begin position="691"/>
        <end position="693"/>
    </location>
</feature>
<feature type="helix" evidence="28">
    <location>
        <begin position="694"/>
        <end position="696"/>
    </location>
</feature>
<feature type="strand" evidence="28">
    <location>
        <begin position="698"/>
        <end position="700"/>
    </location>
</feature>
<feature type="strand" evidence="28">
    <location>
        <begin position="707"/>
        <end position="712"/>
    </location>
</feature>
<feature type="strand" evidence="28">
    <location>
        <begin position="714"/>
        <end position="716"/>
    </location>
</feature>
<feature type="strand" evidence="28">
    <location>
        <begin position="719"/>
        <end position="721"/>
    </location>
</feature>
<feature type="strand" evidence="28">
    <location>
        <begin position="724"/>
        <end position="727"/>
    </location>
</feature>
<feature type="strand" evidence="28">
    <location>
        <begin position="729"/>
        <end position="736"/>
    </location>
</feature>